<sequence length="61" mass="6868">AGVDPLVPLRQAMFNYFQVPDRLGILTHLYRIAEGAQQGDPLSRSWELLKEGFLLALTQGR</sequence>
<accession>P86200</accession>
<comment type="function">
    <text evidence="1 2">Converts endogenous N-acetylglucosamine (GlcNAc), a major component of complex carbohydrates, from lysosomal degradation or nutritional sources into GlcNAc 6-phosphate (By similarity). Also has N-acetylmannosamine (ManNAc) kinase activity (By similarity). Involved in the N-glycolylneuraminic acid (Neu5Gc) degradation pathway (By similarity). Also involved in innate immunity by promoting detection of bacterial peptidoglycan by NOD2: acts by catalyzing phosphorylation of muramyl dipeptide (MDP), a fragment of bacterial peptidoglycan, to generate 6-O-phospho-muramyl dipeptide, which acts as a direct ligand for NOD2 (By similarity).</text>
</comment>
<comment type="catalytic activity">
    <reaction evidence="1">
        <text>N-acetyl-D-glucosamine + ATP = N-acetyl-D-glucosamine 6-phosphate + ADP + H(+)</text>
        <dbReference type="Rhea" id="RHEA:17417"/>
        <dbReference type="ChEBI" id="CHEBI:15378"/>
        <dbReference type="ChEBI" id="CHEBI:30616"/>
        <dbReference type="ChEBI" id="CHEBI:57513"/>
        <dbReference type="ChEBI" id="CHEBI:456216"/>
        <dbReference type="ChEBI" id="CHEBI:506227"/>
        <dbReference type="EC" id="2.7.1.59"/>
    </reaction>
    <physiologicalReaction direction="left-to-right" evidence="1">
        <dbReference type="Rhea" id="RHEA:17418"/>
    </physiologicalReaction>
</comment>
<comment type="catalytic activity">
    <reaction evidence="1">
        <text>aldehydo-N-acetyl-D-mannosamine + ATP = aldehydo-N-acetyl-D-mannosamine 6-phosphate + ADP + H(+)</text>
        <dbReference type="Rhea" id="RHEA:25253"/>
        <dbReference type="ChEBI" id="CHEBI:15378"/>
        <dbReference type="ChEBI" id="CHEBI:17122"/>
        <dbReference type="ChEBI" id="CHEBI:30616"/>
        <dbReference type="ChEBI" id="CHEBI:58557"/>
        <dbReference type="ChEBI" id="CHEBI:456216"/>
        <dbReference type="EC" id="2.7.1.60"/>
    </reaction>
    <physiologicalReaction direction="left-to-right" evidence="1">
        <dbReference type="Rhea" id="RHEA:25254"/>
    </physiologicalReaction>
</comment>
<comment type="catalytic activity">
    <reaction evidence="2">
        <text>N-acetyl-D-muramoyl-L-alanyl-D-isoglutamine + ATP = 6-O-phospho-N-acetyl-D-muramoyl-L-alanyl-D-isoglutamine + ADP + H(+)</text>
        <dbReference type="Rhea" id="RHEA:75935"/>
        <dbReference type="ChEBI" id="CHEBI:15378"/>
        <dbReference type="ChEBI" id="CHEBI:30616"/>
        <dbReference type="ChEBI" id="CHEBI:155830"/>
        <dbReference type="ChEBI" id="CHEBI:194492"/>
        <dbReference type="ChEBI" id="CHEBI:456216"/>
    </reaction>
    <physiologicalReaction direction="left-to-right" evidence="2">
        <dbReference type="Rhea" id="RHEA:75936"/>
    </physiologicalReaction>
</comment>
<comment type="pathway">
    <text evidence="1">Amino-sugar metabolism; N-acetylneuraminate degradation.</text>
</comment>
<comment type="subunit">
    <text evidence="1">Homodimer.</text>
</comment>
<comment type="similarity">
    <text evidence="3">Belongs to the eukaryotic-type N-acetylglucosamine kinase family.</text>
</comment>
<reference key="1">
    <citation type="journal article" date="2010" name="Asian J. Androl.">
        <title>Glucose-regulated protein precursor (GRP78) and tumor rejection antigen (GP96) are unique to hamster caput epididymal spermatozoa.</title>
        <authorList>
            <person name="Kameshwari D.B."/>
            <person name="Bhande S."/>
            <person name="Sundaram C.S."/>
            <person name="Kota V."/>
            <person name="Siva A.B."/>
            <person name="Shivaji S."/>
        </authorList>
    </citation>
    <scope>IDENTIFICATION BY MASS SPECTROMETRY</scope>
</reference>
<evidence type="ECO:0000250" key="1">
    <source>
        <dbReference type="UniProtKB" id="Q9QZ08"/>
    </source>
</evidence>
<evidence type="ECO:0000250" key="2">
    <source>
        <dbReference type="UniProtKB" id="Q9UJ70"/>
    </source>
</evidence>
<evidence type="ECO:0000255" key="3"/>
<evidence type="ECO:0000305" key="4"/>
<protein>
    <recommendedName>
        <fullName evidence="1">N-acetyl-D-glucosamine kinase</fullName>
        <shortName evidence="1">N-acetylglucosamine kinase</shortName>
        <ecNumber evidence="1">2.7.1.59</ecNumber>
    </recommendedName>
    <alternativeName>
        <fullName evidence="1">GlcNAc kinase</fullName>
    </alternativeName>
    <alternativeName>
        <fullName evidence="4">Muramyl dipeptide kinase</fullName>
        <ecNumber evidence="2">2.7.1.-</ecNumber>
    </alternativeName>
    <alternativeName>
        <fullName evidence="4">N-acetyl-D-mannosamine kinase</fullName>
        <ecNumber evidence="1">2.7.1.60</ecNumber>
    </alternativeName>
</protein>
<organism>
    <name type="scientific">Mesocricetus auratus</name>
    <name type="common">Golden hamster</name>
    <dbReference type="NCBI Taxonomy" id="10036"/>
    <lineage>
        <taxon>Eukaryota</taxon>
        <taxon>Metazoa</taxon>
        <taxon>Chordata</taxon>
        <taxon>Craniata</taxon>
        <taxon>Vertebrata</taxon>
        <taxon>Euteleostomi</taxon>
        <taxon>Mammalia</taxon>
        <taxon>Eutheria</taxon>
        <taxon>Euarchontoglires</taxon>
        <taxon>Glires</taxon>
        <taxon>Rodentia</taxon>
        <taxon>Myomorpha</taxon>
        <taxon>Muroidea</taxon>
        <taxon>Cricetidae</taxon>
        <taxon>Cricetinae</taxon>
        <taxon>Mesocricetus</taxon>
    </lineage>
</organism>
<proteinExistence type="evidence at protein level"/>
<name>NAGK_MESAU</name>
<keyword id="KW-0067">ATP-binding</keyword>
<keyword id="KW-0391">Immunity</keyword>
<keyword id="KW-0399">Innate immunity</keyword>
<keyword id="KW-0418">Kinase</keyword>
<keyword id="KW-0547">Nucleotide-binding</keyword>
<keyword id="KW-0597">Phosphoprotein</keyword>
<keyword id="KW-1185">Reference proteome</keyword>
<keyword id="KW-0808">Transferase</keyword>
<feature type="chain" id="PRO_0000394398" description="N-acetyl-D-glucosamine kinase">
    <location>
        <begin position="1" status="less than"/>
        <end position="61" status="greater than"/>
    </location>
</feature>
<feature type="binding site" evidence="2">
    <location>
        <position position="45"/>
    </location>
    <ligand>
        <name>ATP</name>
        <dbReference type="ChEBI" id="CHEBI:30616"/>
    </ligand>
</feature>
<feature type="modified residue" description="Phosphotyrosine" evidence="2">
    <location>
        <position position="30"/>
    </location>
</feature>
<feature type="non-consecutive residues" evidence="4">
    <location>
        <begin position="10"/>
        <end position="11"/>
    </location>
</feature>
<feature type="non-consecutive residues" evidence="4">
    <location>
        <begin position="31"/>
        <end position="32"/>
    </location>
</feature>
<feature type="non-consecutive residues" evidence="4">
    <location>
        <begin position="44"/>
        <end position="45"/>
    </location>
</feature>
<feature type="non-terminal residue">
    <location>
        <position position="1"/>
    </location>
</feature>
<feature type="non-terminal residue">
    <location>
        <position position="61"/>
    </location>
</feature>
<dbReference type="EC" id="2.7.1.59" evidence="1"/>
<dbReference type="EC" id="2.7.1.-" evidence="2"/>
<dbReference type="EC" id="2.7.1.60" evidence="1"/>
<dbReference type="UniPathway" id="UPA00629"/>
<dbReference type="Proteomes" id="UP000189706">
    <property type="component" value="Unplaced"/>
</dbReference>
<dbReference type="GO" id="GO:0005524">
    <property type="term" value="F:ATP binding"/>
    <property type="evidence" value="ECO:0007669"/>
    <property type="project" value="UniProtKB-KW"/>
</dbReference>
<dbReference type="GO" id="GO:0160047">
    <property type="term" value="F:muramyl dipeptide kinase activity"/>
    <property type="evidence" value="ECO:0000250"/>
    <property type="project" value="UniProtKB"/>
</dbReference>
<dbReference type="GO" id="GO:0045127">
    <property type="term" value="F:N-acetylglucosamine kinase activity"/>
    <property type="evidence" value="ECO:0000250"/>
    <property type="project" value="UniProtKB"/>
</dbReference>
<dbReference type="GO" id="GO:0042742">
    <property type="term" value="P:defense response to bacterium"/>
    <property type="evidence" value="ECO:0000250"/>
    <property type="project" value="UniProtKB"/>
</dbReference>
<dbReference type="GO" id="GO:0045087">
    <property type="term" value="P:innate immune response"/>
    <property type="evidence" value="ECO:0007669"/>
    <property type="project" value="UniProtKB-KW"/>
</dbReference>
<dbReference type="GO" id="GO:0019262">
    <property type="term" value="P:N-acetylneuraminate catabolic process"/>
    <property type="evidence" value="ECO:0007669"/>
    <property type="project" value="UniProtKB-UniPathway"/>
</dbReference>
<dbReference type="GO" id="GO:0070434">
    <property type="term" value="P:positive regulation of nucleotide-binding oligomerization domain containing 2 signaling pathway"/>
    <property type="evidence" value="ECO:0000250"/>
    <property type="project" value="UniProtKB"/>
</dbReference>
<dbReference type="GO" id="GO:0032495">
    <property type="term" value="P:response to muramyl dipeptide"/>
    <property type="evidence" value="ECO:0000250"/>
    <property type="project" value="UniProtKB"/>
</dbReference>
<gene>
    <name evidence="1" type="primary">NAGK</name>
</gene>